<keyword id="KW-0002">3D-structure</keyword>
<keyword id="KW-0963">Cytoplasm</keyword>
<keyword id="KW-1267">Proteomics identification</keyword>
<keyword id="KW-1185">Reference proteome</keyword>
<keyword id="KW-0683">Retinol-binding</keyword>
<keyword id="KW-0813">Transport</keyword>
<keyword id="KW-0845">Vitamin A</keyword>
<proteinExistence type="evidence at protein level"/>
<comment type="function">
    <text>Intracellular transport of retinol.</text>
</comment>
<comment type="subcellular location">
    <subcellularLocation>
        <location>Cytoplasm</location>
    </subcellularLocation>
</comment>
<comment type="tissue specificity">
    <text evidence="1">Higher expression in adult small intestine and to a much lesser extent in fetal kidney.</text>
</comment>
<comment type="domain">
    <text>Forms a beta-barrel structure that accommodates hydrophobic ligands in its interior.</text>
</comment>
<comment type="similarity">
    <text evidence="3">Belongs to the calycin superfamily. Fatty-acid binding protein (FABP) family.</text>
</comment>
<gene>
    <name type="primary">RBP2</name>
    <name type="synonym">CRBP2</name>
</gene>
<organism>
    <name type="scientific">Homo sapiens</name>
    <name type="common">Human</name>
    <dbReference type="NCBI Taxonomy" id="9606"/>
    <lineage>
        <taxon>Eukaryota</taxon>
        <taxon>Metazoa</taxon>
        <taxon>Chordata</taxon>
        <taxon>Craniata</taxon>
        <taxon>Vertebrata</taxon>
        <taxon>Euteleostomi</taxon>
        <taxon>Mammalia</taxon>
        <taxon>Eutheria</taxon>
        <taxon>Euarchontoglires</taxon>
        <taxon>Primates</taxon>
        <taxon>Haplorrhini</taxon>
        <taxon>Catarrhini</taxon>
        <taxon>Hominidae</taxon>
        <taxon>Homo</taxon>
    </lineage>
</organism>
<feature type="chain" id="PRO_0000067395" description="Retinol-binding protein 2">
    <location>
        <begin position="1"/>
        <end position="134"/>
    </location>
</feature>
<feature type="binding site" evidence="2">
    <location>
        <position position="41"/>
    </location>
    <ligand>
        <name>all-trans-retinol</name>
        <dbReference type="ChEBI" id="CHEBI:17336"/>
    </ligand>
</feature>
<feature type="binding site" evidence="2">
    <location>
        <position position="109"/>
    </location>
    <ligand>
        <name>all-trans-retinol</name>
        <dbReference type="ChEBI" id="CHEBI:17336"/>
    </ligand>
</feature>
<feature type="sequence conflict" description="In Ref. 1; AAC50162." evidence="3" ref="1">
    <original>R</original>
    <variation>P</variation>
    <location>
        <position position="31"/>
    </location>
</feature>
<feature type="sequence conflict" description="In Ref. 4; AAH69396." evidence="3" ref="4">
    <original>D</original>
    <variation>G</variation>
    <location>
        <position position="114"/>
    </location>
</feature>
<feature type="strand" evidence="6">
    <location>
        <begin position="7"/>
        <end position="16"/>
    </location>
</feature>
<feature type="helix" evidence="6">
    <location>
        <begin position="17"/>
        <end position="23"/>
    </location>
</feature>
<feature type="helix" evidence="6">
    <location>
        <begin position="28"/>
        <end position="33"/>
    </location>
</feature>
<feature type="turn" evidence="6">
    <location>
        <begin position="34"/>
        <end position="36"/>
    </location>
</feature>
<feature type="strand" evidence="6">
    <location>
        <begin position="38"/>
        <end position="46"/>
    </location>
</feature>
<feature type="strand" evidence="6">
    <location>
        <begin position="49"/>
        <end position="57"/>
    </location>
</feature>
<feature type="strand" evidence="6">
    <location>
        <begin position="59"/>
        <end position="66"/>
    </location>
</feature>
<feature type="strand" evidence="6">
    <location>
        <begin position="71"/>
        <end position="74"/>
    </location>
</feature>
<feature type="turn" evidence="6">
    <location>
        <begin position="76"/>
        <end position="79"/>
    </location>
</feature>
<feature type="strand" evidence="6">
    <location>
        <begin position="82"/>
        <end position="90"/>
    </location>
</feature>
<feature type="strand" evidence="6">
    <location>
        <begin position="93"/>
        <end position="102"/>
    </location>
</feature>
<feature type="strand" evidence="6">
    <location>
        <begin position="106"/>
        <end position="112"/>
    </location>
</feature>
<feature type="strand" evidence="6">
    <location>
        <begin position="115"/>
        <end position="122"/>
    </location>
</feature>
<feature type="strand" evidence="6">
    <location>
        <begin position="125"/>
        <end position="133"/>
    </location>
</feature>
<evidence type="ECO:0000269" key="1">
    <source>
    </source>
</evidence>
<evidence type="ECO:0000269" key="2">
    <source>
    </source>
</evidence>
<evidence type="ECO:0000305" key="3"/>
<evidence type="ECO:0007744" key="4">
    <source>
        <dbReference type="PDB" id="2RCQ"/>
    </source>
</evidence>
<evidence type="ECO:0007744" key="5">
    <source>
        <dbReference type="PDB" id="2RCT"/>
    </source>
</evidence>
<evidence type="ECO:0007829" key="6">
    <source>
        <dbReference type="PDB" id="7UCZ"/>
    </source>
</evidence>
<sequence>MTRDQNGTWEMESNENFEGYMKALDIDFATRKIAVRLTQTKVIDQDGDNFKTKTTSTFRNYDVDFTVGVEFDEYTKSLDNRHVKALVTWEGDVLVCVQKGEKENRGWKQWIEGDKLYLELTCGDQVCRQVFKKK</sequence>
<accession>P50120</accession>
<accession>A8K7G3</accession>
<accession>Q6ISQ9</accession>
<accession>Q6ISS7</accession>
<reference key="1">
    <citation type="journal article" date="1995" name="Hum. Reprod.">
        <title>Variation in the expression of cellular retinoid binding proteins in human endometrium throughout the menstrual cycle.</title>
        <authorList>
            <person name="Loughney A.D."/>
            <person name="Kumarendran M.K."/>
            <person name="Thomas E.J."/>
            <person name="Redfern C.P.F."/>
        </authorList>
    </citation>
    <scope>NUCLEOTIDE SEQUENCE [MRNA]</scope>
</reference>
<reference key="2">
    <citation type="journal article" date="2004" name="Nat. Genet.">
        <title>Complete sequencing and characterization of 21,243 full-length human cDNAs.</title>
        <authorList>
            <person name="Ota T."/>
            <person name="Suzuki Y."/>
            <person name="Nishikawa T."/>
            <person name="Otsuki T."/>
            <person name="Sugiyama T."/>
            <person name="Irie R."/>
            <person name="Wakamatsu A."/>
            <person name="Hayashi K."/>
            <person name="Sato H."/>
            <person name="Nagai K."/>
            <person name="Kimura K."/>
            <person name="Makita H."/>
            <person name="Sekine M."/>
            <person name="Obayashi M."/>
            <person name="Nishi T."/>
            <person name="Shibahara T."/>
            <person name="Tanaka T."/>
            <person name="Ishii S."/>
            <person name="Yamamoto J."/>
            <person name="Saito K."/>
            <person name="Kawai Y."/>
            <person name="Isono Y."/>
            <person name="Nakamura Y."/>
            <person name="Nagahari K."/>
            <person name="Murakami K."/>
            <person name="Yasuda T."/>
            <person name="Iwayanagi T."/>
            <person name="Wagatsuma M."/>
            <person name="Shiratori A."/>
            <person name="Sudo H."/>
            <person name="Hosoiri T."/>
            <person name="Kaku Y."/>
            <person name="Kodaira H."/>
            <person name="Kondo H."/>
            <person name="Sugawara M."/>
            <person name="Takahashi M."/>
            <person name="Kanda K."/>
            <person name="Yokoi T."/>
            <person name="Furuya T."/>
            <person name="Kikkawa E."/>
            <person name="Omura Y."/>
            <person name="Abe K."/>
            <person name="Kamihara K."/>
            <person name="Katsuta N."/>
            <person name="Sato K."/>
            <person name="Tanikawa M."/>
            <person name="Yamazaki M."/>
            <person name="Ninomiya K."/>
            <person name="Ishibashi T."/>
            <person name="Yamashita H."/>
            <person name="Murakawa K."/>
            <person name="Fujimori K."/>
            <person name="Tanai H."/>
            <person name="Kimata M."/>
            <person name="Watanabe M."/>
            <person name="Hiraoka S."/>
            <person name="Chiba Y."/>
            <person name="Ishida S."/>
            <person name="Ono Y."/>
            <person name="Takiguchi S."/>
            <person name="Watanabe S."/>
            <person name="Yosida M."/>
            <person name="Hotuta T."/>
            <person name="Kusano J."/>
            <person name="Kanehori K."/>
            <person name="Takahashi-Fujii A."/>
            <person name="Hara H."/>
            <person name="Tanase T.-O."/>
            <person name="Nomura Y."/>
            <person name="Togiya S."/>
            <person name="Komai F."/>
            <person name="Hara R."/>
            <person name="Takeuchi K."/>
            <person name="Arita M."/>
            <person name="Imose N."/>
            <person name="Musashino K."/>
            <person name="Yuuki H."/>
            <person name="Oshima A."/>
            <person name="Sasaki N."/>
            <person name="Aotsuka S."/>
            <person name="Yoshikawa Y."/>
            <person name="Matsunawa H."/>
            <person name="Ichihara T."/>
            <person name="Shiohata N."/>
            <person name="Sano S."/>
            <person name="Moriya S."/>
            <person name="Momiyama H."/>
            <person name="Satoh N."/>
            <person name="Takami S."/>
            <person name="Terashima Y."/>
            <person name="Suzuki O."/>
            <person name="Nakagawa S."/>
            <person name="Senoh A."/>
            <person name="Mizoguchi H."/>
            <person name="Goto Y."/>
            <person name="Shimizu F."/>
            <person name="Wakebe H."/>
            <person name="Hishigaki H."/>
            <person name="Watanabe T."/>
            <person name="Sugiyama A."/>
            <person name="Takemoto M."/>
            <person name="Kawakami B."/>
            <person name="Yamazaki M."/>
            <person name="Watanabe K."/>
            <person name="Kumagai A."/>
            <person name="Itakura S."/>
            <person name="Fukuzumi Y."/>
            <person name="Fujimori Y."/>
            <person name="Komiyama M."/>
            <person name="Tashiro H."/>
            <person name="Tanigami A."/>
            <person name="Fujiwara T."/>
            <person name="Ono T."/>
            <person name="Yamada K."/>
            <person name="Fujii Y."/>
            <person name="Ozaki K."/>
            <person name="Hirao M."/>
            <person name="Ohmori Y."/>
            <person name="Kawabata A."/>
            <person name="Hikiji T."/>
            <person name="Kobatake N."/>
            <person name="Inagaki H."/>
            <person name="Ikema Y."/>
            <person name="Okamoto S."/>
            <person name="Okitani R."/>
            <person name="Kawakami T."/>
            <person name="Noguchi S."/>
            <person name="Itoh T."/>
            <person name="Shigeta K."/>
            <person name="Senba T."/>
            <person name="Matsumura K."/>
            <person name="Nakajima Y."/>
            <person name="Mizuno T."/>
            <person name="Morinaga M."/>
            <person name="Sasaki M."/>
            <person name="Togashi T."/>
            <person name="Oyama M."/>
            <person name="Hata H."/>
            <person name="Watanabe M."/>
            <person name="Komatsu T."/>
            <person name="Mizushima-Sugano J."/>
            <person name="Satoh T."/>
            <person name="Shirai Y."/>
            <person name="Takahashi Y."/>
            <person name="Nakagawa K."/>
            <person name="Okumura K."/>
            <person name="Nagase T."/>
            <person name="Nomura N."/>
            <person name="Kikuchi H."/>
            <person name="Masuho Y."/>
            <person name="Yamashita R."/>
            <person name="Nakai K."/>
            <person name="Yada T."/>
            <person name="Nakamura Y."/>
            <person name="Ohara O."/>
            <person name="Isogai T."/>
            <person name="Sugano S."/>
        </authorList>
    </citation>
    <scope>NUCLEOTIDE SEQUENCE [LARGE SCALE MRNA]</scope>
    <source>
        <tissue>Small intestine</tissue>
    </source>
</reference>
<reference key="3">
    <citation type="submission" date="2005-09" db="EMBL/GenBank/DDBJ databases">
        <authorList>
            <person name="Mural R.J."/>
            <person name="Istrail S."/>
            <person name="Sutton G.G."/>
            <person name="Florea L."/>
            <person name="Halpern A.L."/>
            <person name="Mobarry C.M."/>
            <person name="Lippert R."/>
            <person name="Walenz B."/>
            <person name="Shatkay H."/>
            <person name="Dew I."/>
            <person name="Miller J.R."/>
            <person name="Flanigan M.J."/>
            <person name="Edwards N.J."/>
            <person name="Bolanos R."/>
            <person name="Fasulo D."/>
            <person name="Halldorsson B.V."/>
            <person name="Hannenhalli S."/>
            <person name="Turner R."/>
            <person name="Yooseph S."/>
            <person name="Lu F."/>
            <person name="Nusskern D.R."/>
            <person name="Shue B.C."/>
            <person name="Zheng X.H."/>
            <person name="Zhong F."/>
            <person name="Delcher A.L."/>
            <person name="Huson D.H."/>
            <person name="Kravitz S.A."/>
            <person name="Mouchard L."/>
            <person name="Reinert K."/>
            <person name="Remington K.A."/>
            <person name="Clark A.G."/>
            <person name="Waterman M.S."/>
            <person name="Eichler E.E."/>
            <person name="Adams M.D."/>
            <person name="Hunkapiller M.W."/>
            <person name="Myers E.W."/>
            <person name="Venter J.C."/>
        </authorList>
    </citation>
    <scope>NUCLEOTIDE SEQUENCE [LARGE SCALE GENOMIC DNA]</scope>
</reference>
<reference key="4">
    <citation type="journal article" date="2004" name="Genome Res.">
        <title>The status, quality, and expansion of the NIH full-length cDNA project: the Mammalian Gene Collection (MGC).</title>
        <authorList>
            <consortium name="The MGC Project Team"/>
        </authorList>
    </citation>
    <scope>NUCLEOTIDE SEQUENCE [LARGE SCALE MRNA]</scope>
</reference>
<reference key="5">
    <citation type="journal article" date="2001" name="Proc. Natl. Acad. Sci. U.S.A.">
        <title>Identification, retinoid binding and X-ray analysis of a human retinol-binding protein.</title>
        <authorList>
            <person name="Folli C."/>
            <person name="Calderone V."/>
            <person name="Ottonello S."/>
            <person name="Bolchi A."/>
            <person name="Zanotti G."/>
            <person name="Stoppini M."/>
            <person name="Berni R."/>
        </authorList>
    </citation>
    <scope>TISSUE SPECIFICITY</scope>
</reference>
<reference evidence="4 5" key="6">
    <citation type="journal article" date="2008" name="Proteins">
        <title>Crystal structure of human cellular retinol-binding protein II to 1.2 A resolution.</title>
        <authorList>
            <person name="Tarter M."/>
            <person name="Capaldi S."/>
            <person name="Carrizo M.E."/>
            <person name="Ambrosi E."/>
            <person name="Perduca M."/>
            <person name="Monaco H.L."/>
        </authorList>
    </citation>
    <scope>X-RAY CRYSTALLOGRAPHY (1.2 ANGSTROMS) IN COMPLEX WITH ALL-TRANS-RETINOL</scope>
</reference>
<protein>
    <recommendedName>
        <fullName>Retinol-binding protein 2</fullName>
    </recommendedName>
    <alternativeName>
        <fullName>Cellular retinol-binding protein II</fullName>
        <shortName>CRBP-II</shortName>
    </alternativeName>
</protein>
<name>RET2_HUMAN</name>
<dbReference type="EMBL" id="U13831">
    <property type="protein sequence ID" value="AAC50162.1"/>
    <property type="molecule type" value="mRNA"/>
</dbReference>
<dbReference type="EMBL" id="AK291978">
    <property type="protein sequence ID" value="BAF84667.1"/>
    <property type="molecule type" value="mRNA"/>
</dbReference>
<dbReference type="EMBL" id="CH471052">
    <property type="protein sequence ID" value="EAW79036.1"/>
    <property type="molecule type" value="Genomic_DNA"/>
</dbReference>
<dbReference type="EMBL" id="BC069296">
    <property type="protein sequence ID" value="AAH69296.1"/>
    <property type="molecule type" value="mRNA"/>
</dbReference>
<dbReference type="EMBL" id="BC069361">
    <property type="protein sequence ID" value="AAH69361.1"/>
    <property type="molecule type" value="mRNA"/>
</dbReference>
<dbReference type="EMBL" id="BC069396">
    <property type="protein sequence ID" value="AAH69396.1"/>
    <property type="molecule type" value="mRNA"/>
</dbReference>
<dbReference type="EMBL" id="BC069424">
    <property type="protein sequence ID" value="AAH69424.1"/>
    <property type="molecule type" value="mRNA"/>
</dbReference>
<dbReference type="EMBL" id="BC069447">
    <property type="protein sequence ID" value="AAH69447.1"/>
    <property type="molecule type" value="mRNA"/>
</dbReference>
<dbReference type="EMBL" id="BC069513">
    <property type="protein sequence ID" value="AAH69513.1"/>
    <property type="molecule type" value="mRNA"/>
</dbReference>
<dbReference type="EMBL" id="BC069522">
    <property type="protein sequence ID" value="AAH69522.1"/>
    <property type="molecule type" value="mRNA"/>
</dbReference>
<dbReference type="CCDS" id="CCDS3109.1"/>
<dbReference type="RefSeq" id="NP_004155.2">
    <property type="nucleotide sequence ID" value="NM_004164.2"/>
</dbReference>
<dbReference type="PDB" id="2RCQ">
    <property type="method" value="X-ray"/>
    <property type="resolution" value="1.20 A"/>
    <property type="chains" value="A=2-134"/>
</dbReference>
<dbReference type="PDB" id="2RCT">
    <property type="method" value="X-ray"/>
    <property type="resolution" value="1.20 A"/>
    <property type="chains" value="A=2-134"/>
</dbReference>
<dbReference type="PDB" id="4EDE">
    <property type="method" value="X-ray"/>
    <property type="resolution" value="1.40 A"/>
    <property type="chains" value="A/B=2-134"/>
</dbReference>
<dbReference type="PDB" id="4EEJ">
    <property type="method" value="X-ray"/>
    <property type="resolution" value="1.50 A"/>
    <property type="chains" value="A/B=2-134"/>
</dbReference>
<dbReference type="PDB" id="4EFG">
    <property type="method" value="X-ray"/>
    <property type="resolution" value="1.58 A"/>
    <property type="chains" value="A/B=2-134"/>
</dbReference>
<dbReference type="PDB" id="4EXZ">
    <property type="method" value="X-ray"/>
    <property type="resolution" value="1.61 A"/>
    <property type="chains" value="A/B=2-134"/>
</dbReference>
<dbReference type="PDB" id="4GKC">
    <property type="method" value="X-ray"/>
    <property type="resolution" value="1.30 A"/>
    <property type="chains" value="A/B=2-134"/>
</dbReference>
<dbReference type="PDB" id="4QYN">
    <property type="method" value="X-ray"/>
    <property type="resolution" value="1.19 A"/>
    <property type="chains" value="A/B=2-134"/>
</dbReference>
<dbReference type="PDB" id="4QYP">
    <property type="method" value="X-ray"/>
    <property type="resolution" value="1.62 A"/>
    <property type="chains" value="A/B/C/D=2-134"/>
</dbReference>
<dbReference type="PDB" id="4QZT">
    <property type="method" value="X-ray"/>
    <property type="resolution" value="1.90 A"/>
    <property type="chains" value="A/B/C/D=2-134"/>
</dbReference>
<dbReference type="PDB" id="4QZU">
    <property type="method" value="X-ray"/>
    <property type="resolution" value="1.50 A"/>
    <property type="chains" value="A/B/C/D=2-134"/>
</dbReference>
<dbReference type="PDB" id="4RUU">
    <property type="method" value="X-ray"/>
    <property type="resolution" value="1.40 A"/>
    <property type="chains" value="A/B=2-134"/>
</dbReference>
<dbReference type="PDB" id="4ZCB">
    <property type="method" value="X-ray"/>
    <property type="resolution" value="1.70 A"/>
    <property type="chains" value="A/B=2-134"/>
</dbReference>
<dbReference type="PDB" id="4ZGU">
    <property type="method" value="X-ray"/>
    <property type="resolution" value="1.49 A"/>
    <property type="chains" value="A/B/C/D=2-134"/>
</dbReference>
<dbReference type="PDB" id="4ZH6">
    <property type="method" value="X-ray"/>
    <property type="resolution" value="1.55 A"/>
    <property type="chains" value="A=2-134"/>
</dbReference>
<dbReference type="PDB" id="4ZH9">
    <property type="method" value="X-ray"/>
    <property type="resolution" value="2.66 A"/>
    <property type="chains" value="A=2-134"/>
</dbReference>
<dbReference type="PDB" id="4ZJ0">
    <property type="method" value="X-ray"/>
    <property type="resolution" value="1.50 A"/>
    <property type="chains" value="A/B=2-134"/>
</dbReference>
<dbReference type="PDB" id="4ZR2">
    <property type="method" value="X-ray"/>
    <property type="resolution" value="1.80 A"/>
    <property type="chains" value="A/B=2-134"/>
</dbReference>
<dbReference type="PDB" id="5DG4">
    <property type="method" value="X-ray"/>
    <property type="resolution" value="1.50 A"/>
    <property type="chains" value="A/B/C/D=2-134"/>
</dbReference>
<dbReference type="PDB" id="5DPQ">
    <property type="method" value="X-ray"/>
    <property type="resolution" value="1.77 A"/>
    <property type="chains" value="A/B=2-134"/>
</dbReference>
<dbReference type="PDB" id="5F58">
    <property type="method" value="X-ray"/>
    <property type="resolution" value="1.54 A"/>
    <property type="chains" value="A/B=2-134"/>
</dbReference>
<dbReference type="PDB" id="5F6B">
    <property type="method" value="X-ray"/>
    <property type="resolution" value="1.31 A"/>
    <property type="chains" value="A/B=2-134"/>
</dbReference>
<dbReference type="PDB" id="5F7G">
    <property type="method" value="X-ray"/>
    <property type="resolution" value="1.48 A"/>
    <property type="chains" value="A/B=2-134"/>
</dbReference>
<dbReference type="PDB" id="5FAZ">
    <property type="method" value="X-ray"/>
    <property type="resolution" value="1.40 A"/>
    <property type="chains" value="A/B=2-134"/>
</dbReference>
<dbReference type="PDB" id="5FEN">
    <property type="method" value="X-ray"/>
    <property type="resolution" value="1.55 A"/>
    <property type="chains" value="A/B=2-134"/>
</dbReference>
<dbReference type="PDB" id="5FFH">
    <property type="method" value="X-ray"/>
    <property type="resolution" value="1.68 A"/>
    <property type="chains" value="A/B=2-134"/>
</dbReference>
<dbReference type="PDB" id="5U6G">
    <property type="method" value="X-ray"/>
    <property type="resolution" value="2.60 A"/>
    <property type="chains" value="A/B/C/D/E/F/G/H/I/J/K/L=2-134"/>
</dbReference>
<dbReference type="PDB" id="6BTH">
    <property type="method" value="X-ray"/>
    <property type="resolution" value="1.35 A"/>
    <property type="chains" value="A/B=1-134"/>
</dbReference>
<dbReference type="PDB" id="6BTI">
    <property type="method" value="X-ray"/>
    <property type="resolution" value="1.45 A"/>
    <property type="chains" value="A/B=1-134"/>
</dbReference>
<dbReference type="PDB" id="6C7Z">
    <property type="method" value="X-ray"/>
    <property type="resolution" value="1.42 A"/>
    <property type="chains" value="A/B=2-134"/>
</dbReference>
<dbReference type="PDB" id="6E50">
    <property type="method" value="X-ray"/>
    <property type="resolution" value="1.97 A"/>
    <property type="chains" value="A=2-134"/>
</dbReference>
<dbReference type="PDB" id="6E51">
    <property type="method" value="X-ray"/>
    <property type="resolution" value="2.26 A"/>
    <property type="chains" value="A=2-134"/>
</dbReference>
<dbReference type="PDB" id="6E5E">
    <property type="method" value="X-ray"/>
    <property type="resolution" value="1.70 A"/>
    <property type="chains" value="A=2-134"/>
</dbReference>
<dbReference type="PDB" id="6E5Q">
    <property type="method" value="X-ray"/>
    <property type="resolution" value="1.99 A"/>
    <property type="chains" value="A=2-134"/>
</dbReference>
<dbReference type="PDB" id="6E5R">
    <property type="method" value="X-ray"/>
    <property type="resolution" value="2.59 A"/>
    <property type="chains" value="A/B=2-134"/>
</dbReference>
<dbReference type="PDB" id="6E5S">
    <property type="method" value="X-ray"/>
    <property type="resolution" value="2.06 A"/>
    <property type="chains" value="A/B/C/D/E/F/G/H/I/J/K/L=2-134"/>
</dbReference>
<dbReference type="PDB" id="6E6L">
    <property type="method" value="X-ray"/>
    <property type="resolution" value="2.08 A"/>
    <property type="chains" value="A=2-134"/>
</dbReference>
<dbReference type="PDB" id="6E7M">
    <property type="method" value="X-ray"/>
    <property type="resolution" value="2.70 A"/>
    <property type="chains" value="A/B/C/D=2-134"/>
</dbReference>
<dbReference type="PDB" id="6MCU">
    <property type="method" value="X-ray"/>
    <property type="resolution" value="2.57 A"/>
    <property type="chains" value="A/B/C/D/E/F/G/H/I/J/K/L=2-134"/>
</dbReference>
<dbReference type="PDB" id="6MCV">
    <property type="method" value="X-ray"/>
    <property type="resolution" value="3.30 A"/>
    <property type="chains" value="A/B/C/D/E/F/G/H/I/J/K/L=2-134"/>
</dbReference>
<dbReference type="PDB" id="6MKV">
    <property type="method" value="X-ray"/>
    <property type="resolution" value="2.11 A"/>
    <property type="chains" value="A/B/C/D=2-134"/>
</dbReference>
<dbReference type="PDB" id="6MLB">
    <property type="method" value="X-ray"/>
    <property type="resolution" value="2.15 A"/>
    <property type="chains" value="A/B/C/D=2-134"/>
</dbReference>
<dbReference type="PDB" id="6ON5">
    <property type="method" value="X-ray"/>
    <property type="resolution" value="1.64 A"/>
    <property type="chains" value="A/B=2-134"/>
</dbReference>
<dbReference type="PDB" id="6ON7">
    <property type="method" value="X-ray"/>
    <property type="resolution" value="1.98 A"/>
    <property type="chains" value="A/B=2-134"/>
</dbReference>
<dbReference type="PDB" id="6ON8">
    <property type="method" value="X-ray"/>
    <property type="resolution" value="2.40 A"/>
    <property type="chains" value="A=2-134"/>
</dbReference>
<dbReference type="PDB" id="6VID">
    <property type="method" value="X-ray"/>
    <property type="resolution" value="2.89 A"/>
    <property type="chains" value="A/B/C/D/E/F=2-134"/>
</dbReference>
<dbReference type="PDB" id="6VIS">
    <property type="method" value="X-ray"/>
    <property type="resolution" value="2.79 A"/>
    <property type="chains" value="A/B/C=2-134"/>
</dbReference>
<dbReference type="PDB" id="6VIT">
    <property type="method" value="X-ray"/>
    <property type="resolution" value="3.20 A"/>
    <property type="chains" value="A/B=2-134"/>
</dbReference>
<dbReference type="PDB" id="6WNF">
    <property type="method" value="X-ray"/>
    <property type="resolution" value="1.67 A"/>
    <property type="chains" value="A/B=2-134"/>
</dbReference>
<dbReference type="PDB" id="6WNJ">
    <property type="method" value="X-ray"/>
    <property type="resolution" value="2.10 A"/>
    <property type="chains" value="A/B/C=2-134"/>
</dbReference>
<dbReference type="PDB" id="6WP0">
    <property type="method" value="X-ray"/>
    <property type="resolution" value="2.78 A"/>
    <property type="chains" value="A/B/C/D/E/F/G/H/I/J/K/L=2-134"/>
</dbReference>
<dbReference type="PDB" id="6WP1">
    <property type="method" value="X-ray"/>
    <property type="resolution" value="2.99 A"/>
    <property type="chains" value="A/B/C/D/E/F=2-134"/>
</dbReference>
<dbReference type="PDB" id="6WP2">
    <property type="method" value="X-ray"/>
    <property type="resolution" value="2.48 A"/>
    <property type="chains" value="A/B/C=2-134"/>
</dbReference>
<dbReference type="PDB" id="7JVG">
    <property type="method" value="X-ray"/>
    <property type="resolution" value="1.40 A"/>
    <property type="chains" value="A/B=1-134"/>
</dbReference>
<dbReference type="PDB" id="7JVY">
    <property type="method" value="X-ray"/>
    <property type="resolution" value="1.30 A"/>
    <property type="chains" value="A/B=1-134"/>
</dbReference>
<dbReference type="PDB" id="7JWD">
    <property type="method" value="X-ray"/>
    <property type="resolution" value="1.35 A"/>
    <property type="chains" value="A/B=1-134"/>
</dbReference>
<dbReference type="PDB" id="7JWR">
    <property type="method" value="X-ray"/>
    <property type="resolution" value="1.30 A"/>
    <property type="chains" value="A/B=1-134"/>
</dbReference>
<dbReference type="PDB" id="7JX2">
    <property type="method" value="X-ray"/>
    <property type="resolution" value="1.80 A"/>
    <property type="chains" value="A=1-134"/>
</dbReference>
<dbReference type="PDB" id="7JZ5">
    <property type="method" value="X-ray"/>
    <property type="resolution" value="1.57 A"/>
    <property type="chains" value="A/B=1-134"/>
</dbReference>
<dbReference type="PDB" id="7K3I">
    <property type="method" value="X-ray"/>
    <property type="resolution" value="1.20 A"/>
    <property type="chains" value="A=1-134"/>
</dbReference>
<dbReference type="PDB" id="7LHJ">
    <property type="method" value="X-ray"/>
    <property type="resolution" value="1.26 A"/>
    <property type="chains" value="A/B=2-134"/>
</dbReference>
<dbReference type="PDB" id="7LHM">
    <property type="method" value="X-ray"/>
    <property type="resolution" value="1.50 A"/>
    <property type="chains" value="A/B=2-134"/>
</dbReference>
<dbReference type="PDB" id="7LHN">
    <property type="method" value="X-ray"/>
    <property type="resolution" value="2.11 A"/>
    <property type="chains" value="A/B=2-134"/>
</dbReference>
<dbReference type="PDB" id="7LHO">
    <property type="method" value="X-ray"/>
    <property type="resolution" value="1.40 A"/>
    <property type="chains" value="A/B=2-134"/>
</dbReference>
<dbReference type="PDB" id="7LSQ">
    <property type="method" value="X-ray"/>
    <property type="resolution" value="1.67 A"/>
    <property type="chains" value="A/B/C/D=2-134"/>
</dbReference>
<dbReference type="PDB" id="7MFX">
    <property type="method" value="X-ray"/>
    <property type="resolution" value="1.59 A"/>
    <property type="chains" value="A/B/C/D=2-134"/>
</dbReference>
<dbReference type="PDB" id="7MFY">
    <property type="method" value="X-ray"/>
    <property type="resolution" value="1.26 A"/>
    <property type="chains" value="A=2-134"/>
</dbReference>
<dbReference type="PDB" id="7MFZ">
    <property type="method" value="X-ray"/>
    <property type="resolution" value="2.49 A"/>
    <property type="chains" value="A/B/C=2-134"/>
</dbReference>
<dbReference type="PDB" id="7UCN">
    <property type="method" value="X-ray"/>
    <property type="resolution" value="1.96 A"/>
    <property type="chains" value="A/B=2-134"/>
</dbReference>
<dbReference type="PDB" id="7UCS">
    <property type="method" value="X-ray"/>
    <property type="resolution" value="1.92 A"/>
    <property type="chains" value="A/B=2-134"/>
</dbReference>
<dbReference type="PDB" id="7UCT">
    <property type="method" value="X-ray"/>
    <property type="resolution" value="2.52 A"/>
    <property type="chains" value="A/B=2-134"/>
</dbReference>
<dbReference type="PDB" id="7UCV">
    <property type="method" value="X-ray"/>
    <property type="resolution" value="2.19 A"/>
    <property type="chains" value="A/B=2-134"/>
</dbReference>
<dbReference type="PDB" id="7UCZ">
    <property type="method" value="X-ray"/>
    <property type="resolution" value="1.08 A"/>
    <property type="chains" value="A/B=2-134"/>
</dbReference>
<dbReference type="PDB" id="7UD1">
    <property type="method" value="X-ray"/>
    <property type="resolution" value="1.32 A"/>
    <property type="chains" value="A/B=2-134"/>
</dbReference>
<dbReference type="PDB" id="7UD3">
    <property type="method" value="X-ray"/>
    <property type="resolution" value="2.37 A"/>
    <property type="chains" value="A/B/C/D=2-134"/>
</dbReference>
<dbReference type="PDB" id="8D6H">
    <property type="method" value="X-ray"/>
    <property type="resolution" value="1.60 A"/>
    <property type="chains" value="A=2-134"/>
</dbReference>
<dbReference type="PDB" id="8D6L">
    <property type="method" value="X-ray"/>
    <property type="resolution" value="1.69 A"/>
    <property type="chains" value="A=2-134"/>
</dbReference>
<dbReference type="PDB" id="8D6N">
    <property type="method" value="X-ray"/>
    <property type="resolution" value="1.42 A"/>
    <property type="chains" value="A=2-134"/>
</dbReference>
<dbReference type="PDB" id="8DB2">
    <property type="method" value="X-ray"/>
    <property type="resolution" value="1.50 A"/>
    <property type="chains" value="A=2-134"/>
</dbReference>
<dbReference type="PDB" id="8DN1">
    <property type="method" value="X-ray"/>
    <property type="resolution" value="1.32 A"/>
    <property type="chains" value="A=2-134"/>
</dbReference>
<dbReference type="PDB" id="8VZX">
    <property type="method" value="X-ray"/>
    <property type="resolution" value="1.47 A"/>
    <property type="chains" value="A/B/C/D=2-134"/>
</dbReference>
<dbReference type="PDB" id="8VZY">
    <property type="method" value="X-ray"/>
    <property type="resolution" value="1.34 A"/>
    <property type="chains" value="A/B=2-134"/>
</dbReference>
<dbReference type="PDB" id="8VZZ">
    <property type="method" value="X-ray"/>
    <property type="resolution" value="1.22 A"/>
    <property type="chains" value="A/B=2-134"/>
</dbReference>
<dbReference type="PDB" id="8W00">
    <property type="method" value="X-ray"/>
    <property type="resolution" value="1.23 A"/>
    <property type="chains" value="A/B=2-134"/>
</dbReference>
<dbReference type="PDB" id="8W02">
    <property type="method" value="X-ray"/>
    <property type="resolution" value="1.50 A"/>
    <property type="chains" value="A/B=2-134"/>
</dbReference>
<dbReference type="PDB" id="9D8M">
    <property type="method" value="X-ray"/>
    <property type="resolution" value="1.20 A"/>
    <property type="chains" value="A/B=2-134"/>
</dbReference>
<dbReference type="PDB" id="9D8N">
    <property type="method" value="X-ray"/>
    <property type="resolution" value="1.30 A"/>
    <property type="chains" value="A/B=2-134"/>
</dbReference>
<dbReference type="PDB" id="9DDU">
    <property type="method" value="X-ray"/>
    <property type="resolution" value="1.60 A"/>
    <property type="chains" value="A/B=2-134"/>
</dbReference>
<dbReference type="PDB" id="9DF1">
    <property type="method" value="X-ray"/>
    <property type="resolution" value="1.52 A"/>
    <property type="chains" value="A/B=2-134"/>
</dbReference>
<dbReference type="PDBsum" id="2RCQ"/>
<dbReference type="PDBsum" id="2RCT"/>
<dbReference type="PDBsum" id="4EDE"/>
<dbReference type="PDBsum" id="4EEJ"/>
<dbReference type="PDBsum" id="4EFG"/>
<dbReference type="PDBsum" id="4EXZ"/>
<dbReference type="PDBsum" id="4GKC"/>
<dbReference type="PDBsum" id="4QYN"/>
<dbReference type="PDBsum" id="4QYP"/>
<dbReference type="PDBsum" id="4QZT"/>
<dbReference type="PDBsum" id="4QZU"/>
<dbReference type="PDBsum" id="4RUU"/>
<dbReference type="PDBsum" id="4ZCB"/>
<dbReference type="PDBsum" id="4ZGU"/>
<dbReference type="PDBsum" id="4ZH6"/>
<dbReference type="PDBsum" id="4ZH9"/>
<dbReference type="PDBsum" id="4ZJ0"/>
<dbReference type="PDBsum" id="4ZR2"/>
<dbReference type="PDBsum" id="5DG4"/>
<dbReference type="PDBsum" id="5DPQ"/>
<dbReference type="PDBsum" id="5F58"/>
<dbReference type="PDBsum" id="5F6B"/>
<dbReference type="PDBsum" id="5F7G"/>
<dbReference type="PDBsum" id="5FAZ"/>
<dbReference type="PDBsum" id="5FEN"/>
<dbReference type="PDBsum" id="5FFH"/>
<dbReference type="PDBsum" id="5U6G"/>
<dbReference type="PDBsum" id="6BTH"/>
<dbReference type="PDBsum" id="6BTI"/>
<dbReference type="PDBsum" id="6C7Z"/>
<dbReference type="PDBsum" id="6E50"/>
<dbReference type="PDBsum" id="6E51"/>
<dbReference type="PDBsum" id="6E5E"/>
<dbReference type="PDBsum" id="6E5Q"/>
<dbReference type="PDBsum" id="6E5R"/>
<dbReference type="PDBsum" id="6E5S"/>
<dbReference type="PDBsum" id="6E6L"/>
<dbReference type="PDBsum" id="6E7M"/>
<dbReference type="PDBsum" id="6MCU"/>
<dbReference type="PDBsum" id="6MCV"/>
<dbReference type="PDBsum" id="6MKV"/>
<dbReference type="PDBsum" id="6MLB"/>
<dbReference type="PDBsum" id="6ON5"/>
<dbReference type="PDBsum" id="6ON7"/>
<dbReference type="PDBsum" id="6ON8"/>
<dbReference type="PDBsum" id="6VID"/>
<dbReference type="PDBsum" id="6VIS"/>
<dbReference type="PDBsum" id="6VIT"/>
<dbReference type="PDBsum" id="6WNF"/>
<dbReference type="PDBsum" id="6WNJ"/>
<dbReference type="PDBsum" id="6WP0"/>
<dbReference type="PDBsum" id="6WP1"/>
<dbReference type="PDBsum" id="6WP2"/>
<dbReference type="PDBsum" id="7JVG"/>
<dbReference type="PDBsum" id="7JVY"/>
<dbReference type="PDBsum" id="7JWD"/>
<dbReference type="PDBsum" id="7JWR"/>
<dbReference type="PDBsum" id="7JX2"/>
<dbReference type="PDBsum" id="7JZ5"/>
<dbReference type="PDBsum" id="7K3I"/>
<dbReference type="PDBsum" id="7LHJ"/>
<dbReference type="PDBsum" id="7LHM"/>
<dbReference type="PDBsum" id="7LHN"/>
<dbReference type="PDBsum" id="7LHO"/>
<dbReference type="PDBsum" id="7LSQ"/>
<dbReference type="PDBsum" id="7MFX"/>
<dbReference type="PDBsum" id="7MFY"/>
<dbReference type="PDBsum" id="7MFZ"/>
<dbReference type="PDBsum" id="7UCN"/>
<dbReference type="PDBsum" id="7UCS"/>
<dbReference type="PDBsum" id="7UCT"/>
<dbReference type="PDBsum" id="7UCV"/>
<dbReference type="PDBsum" id="7UCZ"/>
<dbReference type="PDBsum" id="7UD1"/>
<dbReference type="PDBsum" id="7UD3"/>
<dbReference type="PDBsum" id="8D6H"/>
<dbReference type="PDBsum" id="8D6L"/>
<dbReference type="PDBsum" id="8D6N"/>
<dbReference type="PDBsum" id="8DB2"/>
<dbReference type="PDBsum" id="8DN1"/>
<dbReference type="PDBsum" id="8VZX"/>
<dbReference type="PDBsum" id="8VZY"/>
<dbReference type="PDBsum" id="8VZZ"/>
<dbReference type="PDBsum" id="8W00"/>
<dbReference type="PDBsum" id="8W02"/>
<dbReference type="PDBsum" id="9D8M"/>
<dbReference type="PDBsum" id="9D8N"/>
<dbReference type="PDBsum" id="9DDU"/>
<dbReference type="PDBsum" id="9DF1"/>
<dbReference type="SMR" id="P50120"/>
<dbReference type="BioGRID" id="111882">
    <property type="interactions" value="9"/>
</dbReference>
<dbReference type="FunCoup" id="P50120">
    <property type="interactions" value="244"/>
</dbReference>
<dbReference type="IntAct" id="P50120">
    <property type="interactions" value="3"/>
</dbReference>
<dbReference type="STRING" id="9606.ENSP00000232217"/>
<dbReference type="DrugBank" id="DB06755">
    <property type="generic name" value="Beta carotene"/>
</dbReference>
<dbReference type="DrugBank" id="DB00162">
    <property type="generic name" value="Vitamin A"/>
</dbReference>
<dbReference type="DrugCentral" id="P50120"/>
<dbReference type="TCDB" id="8.A.33.1.3">
    <property type="family name" value="the fatty acid binding protein (fabp) family"/>
</dbReference>
<dbReference type="GlyConnect" id="2069">
    <property type="glycosylation" value="1 N-Linked glycan (1 site)"/>
</dbReference>
<dbReference type="GlyCosmos" id="P50120">
    <property type="glycosylation" value="1 site, 2 glycans"/>
</dbReference>
<dbReference type="GlyGen" id="P50120">
    <property type="glycosylation" value="1 site, 2 N-linked glycans (1 site)"/>
</dbReference>
<dbReference type="iPTMnet" id="P50120"/>
<dbReference type="PhosphoSitePlus" id="P50120"/>
<dbReference type="BioMuta" id="RBP2"/>
<dbReference type="DMDM" id="62297500"/>
<dbReference type="jPOST" id="P50120"/>
<dbReference type="MassIVE" id="P50120"/>
<dbReference type="PaxDb" id="9606-ENSP00000232217"/>
<dbReference type="PeptideAtlas" id="P50120"/>
<dbReference type="ProteomicsDB" id="56194"/>
<dbReference type="Antibodypedia" id="33461">
    <property type="antibodies" value="253 antibodies from 27 providers"/>
</dbReference>
<dbReference type="DNASU" id="5948"/>
<dbReference type="Ensembl" id="ENST00000232217.6">
    <property type="protein sequence ID" value="ENSP00000232217.2"/>
    <property type="gene ID" value="ENSG00000114113.6"/>
</dbReference>
<dbReference type="GeneID" id="5948"/>
<dbReference type="KEGG" id="hsa:5948"/>
<dbReference type="MANE-Select" id="ENST00000232217.6">
    <property type="protein sequence ID" value="ENSP00000232217.2"/>
    <property type="RefSeq nucleotide sequence ID" value="NM_004164.3"/>
    <property type="RefSeq protein sequence ID" value="NP_004155.2"/>
</dbReference>
<dbReference type="UCSC" id="uc003eth.4">
    <property type="organism name" value="human"/>
</dbReference>
<dbReference type="AGR" id="HGNC:9920"/>
<dbReference type="CTD" id="5948"/>
<dbReference type="DisGeNET" id="5948"/>
<dbReference type="GeneCards" id="RBP2"/>
<dbReference type="HGNC" id="HGNC:9920">
    <property type="gene designation" value="RBP2"/>
</dbReference>
<dbReference type="HPA" id="ENSG00000114113">
    <property type="expression patterns" value="Tissue enriched (intestine)"/>
</dbReference>
<dbReference type="MIM" id="180280">
    <property type="type" value="gene"/>
</dbReference>
<dbReference type="neXtProt" id="NX_P50120"/>
<dbReference type="OpenTargets" id="ENSG00000114113"/>
<dbReference type="PharmGKB" id="PA34287"/>
<dbReference type="VEuPathDB" id="HostDB:ENSG00000114113"/>
<dbReference type="eggNOG" id="KOG4015">
    <property type="taxonomic scope" value="Eukaryota"/>
</dbReference>
<dbReference type="GeneTree" id="ENSGT00940000160165"/>
<dbReference type="HOGENOM" id="CLU_113772_5_1_1"/>
<dbReference type="InParanoid" id="P50120"/>
<dbReference type="OMA" id="EFEECTK"/>
<dbReference type="OrthoDB" id="354351at2759"/>
<dbReference type="PAN-GO" id="P50120">
    <property type="GO annotations" value="4 GO annotations based on evolutionary models"/>
</dbReference>
<dbReference type="PhylomeDB" id="P50120"/>
<dbReference type="TreeFam" id="TF316894"/>
<dbReference type="BioCyc" id="MetaCyc:ENSG00000114113-MONOMER"/>
<dbReference type="PathwayCommons" id="P50120"/>
<dbReference type="Reactome" id="R-HSA-975634">
    <property type="pathway name" value="Retinoid metabolism and transport"/>
</dbReference>
<dbReference type="SignaLink" id="P50120"/>
<dbReference type="SIGNOR" id="P50120"/>
<dbReference type="BioGRID-ORCS" id="5948">
    <property type="hits" value="11 hits in 1153 CRISPR screens"/>
</dbReference>
<dbReference type="EvolutionaryTrace" id="P50120"/>
<dbReference type="GeneWiki" id="RBP2"/>
<dbReference type="GenomeRNAi" id="5948"/>
<dbReference type="Pharos" id="P50120">
    <property type="development level" value="Tbio"/>
</dbReference>
<dbReference type="PRO" id="PR:P50120"/>
<dbReference type="Proteomes" id="UP000005640">
    <property type="component" value="Chromosome 3"/>
</dbReference>
<dbReference type="RNAct" id="P50120">
    <property type="molecule type" value="protein"/>
</dbReference>
<dbReference type="Bgee" id="ENSG00000114113">
    <property type="expression patterns" value="Expressed in jejunal mucosa and 127 other cell types or tissues"/>
</dbReference>
<dbReference type="ExpressionAtlas" id="P50120">
    <property type="expression patterns" value="baseline and differential"/>
</dbReference>
<dbReference type="GO" id="GO:0005829">
    <property type="term" value="C:cytosol"/>
    <property type="evidence" value="ECO:0000318"/>
    <property type="project" value="GO_Central"/>
</dbReference>
<dbReference type="GO" id="GO:0005634">
    <property type="term" value="C:nucleus"/>
    <property type="evidence" value="ECO:0000318"/>
    <property type="project" value="GO_Central"/>
</dbReference>
<dbReference type="GO" id="GO:0005504">
    <property type="term" value="F:fatty acid binding"/>
    <property type="evidence" value="ECO:0000318"/>
    <property type="project" value="GO_Central"/>
</dbReference>
<dbReference type="GO" id="GO:0140104">
    <property type="term" value="F:molecular carrier activity"/>
    <property type="evidence" value="ECO:0007669"/>
    <property type="project" value="Ensembl"/>
</dbReference>
<dbReference type="GO" id="GO:0016918">
    <property type="term" value="F:retinal binding"/>
    <property type="evidence" value="ECO:0007669"/>
    <property type="project" value="UniProtKB-KW"/>
</dbReference>
<dbReference type="GO" id="GO:0005501">
    <property type="term" value="F:retinoid binding"/>
    <property type="evidence" value="ECO:0000304"/>
    <property type="project" value="ProtInc"/>
</dbReference>
<dbReference type="GO" id="GO:0019841">
    <property type="term" value="F:retinol binding"/>
    <property type="evidence" value="ECO:0007669"/>
    <property type="project" value="UniProtKB-KW"/>
</dbReference>
<dbReference type="GO" id="GO:0008544">
    <property type="term" value="P:epidermis development"/>
    <property type="evidence" value="ECO:0000304"/>
    <property type="project" value="ProtInc"/>
</dbReference>
<dbReference type="GO" id="GO:0015908">
    <property type="term" value="P:fatty acid transport"/>
    <property type="evidence" value="ECO:0000318"/>
    <property type="project" value="GO_Central"/>
</dbReference>
<dbReference type="GO" id="GO:0006776">
    <property type="term" value="P:vitamin A metabolic process"/>
    <property type="evidence" value="ECO:0000304"/>
    <property type="project" value="ProtInc"/>
</dbReference>
<dbReference type="CDD" id="cd19463">
    <property type="entry name" value="CRBP2"/>
    <property type="match status" value="1"/>
</dbReference>
<dbReference type="FunFam" id="2.40.128.20:FF:000001">
    <property type="entry name" value="Fatty acid-binding protein, adipocyte"/>
    <property type="match status" value="1"/>
</dbReference>
<dbReference type="Gene3D" id="2.40.128.20">
    <property type="match status" value="1"/>
</dbReference>
<dbReference type="InterPro" id="IPR012674">
    <property type="entry name" value="Calycin"/>
</dbReference>
<dbReference type="InterPro" id="IPR000463">
    <property type="entry name" value="Fatty_acid-bd"/>
</dbReference>
<dbReference type="InterPro" id="IPR031259">
    <property type="entry name" value="ILBP"/>
</dbReference>
<dbReference type="InterPro" id="IPR000566">
    <property type="entry name" value="Lipocln_cytosolic_FA-bd_dom"/>
</dbReference>
<dbReference type="PANTHER" id="PTHR11955">
    <property type="entry name" value="FATTY ACID BINDING PROTEIN"/>
    <property type="match status" value="1"/>
</dbReference>
<dbReference type="Pfam" id="PF00061">
    <property type="entry name" value="Lipocalin"/>
    <property type="match status" value="1"/>
</dbReference>
<dbReference type="PRINTS" id="PR00178">
    <property type="entry name" value="FATTYACIDBP"/>
</dbReference>
<dbReference type="SUPFAM" id="SSF50814">
    <property type="entry name" value="Lipocalins"/>
    <property type="match status" value="1"/>
</dbReference>
<dbReference type="PROSITE" id="PS00214">
    <property type="entry name" value="FABP"/>
    <property type="match status" value="1"/>
</dbReference>